<reference key="1">
    <citation type="journal article" date="1995" name="J. Biol. Chem.">
        <title>A new family of conotoxins that blocks voltage-gated sodium channels.</title>
        <authorList>
            <person name="McIntosh J.M."/>
            <person name="Hasson A."/>
            <person name="Spira M.E."/>
            <person name="Gray W.R."/>
            <person name="Li W."/>
            <person name="Marsh M."/>
            <person name="Hillyard D.R."/>
            <person name="Olivera B.M."/>
        </authorList>
    </citation>
    <scope>NUCLEOTIDE SEQUENCE [MRNA]</scope>
    <scope>PROTEIN SEQUENCE OF 52-82</scope>
    <scope>MASS SPECTROMETRY</scope>
    <scope>SUBCELLULAR LOCATION</scope>
    <source>
        <tissue>Venom</tissue>
    </source>
</reference>
<reference key="2">
    <citation type="journal article" date="1995" name="Biochemistry">
        <title>New sodium channel-blocking conotoxins also affect calcium currents in Lymnaea neurons.</title>
        <authorList>
            <person name="Fainzilber M."/>
            <person name="van der Schors R."/>
            <person name="Lodder J.C."/>
            <person name="Li K.W."/>
            <person name="Geraerts W.P."/>
            <person name="Kits K.S."/>
        </authorList>
    </citation>
    <scope>PROTEIN SEQUENCE OF 52-82</scope>
    <scope>FUNCTION</scope>
    <scope>MASS SPECTROMETRY</scope>
    <scope>SUBCELLULAR LOCATION</scope>
    <source>
        <tissue>Venom</tissue>
    </source>
</reference>
<reference key="3">
    <citation type="journal article" date="2004" name="J. Biol. Chem.">
        <title>Structures of muO-conotoxins from Conus marmoreus. Inhibitors of tetrodotoxin (TTX)-sensitive and TTX-resistant sodium channels in mammalian sensory neurons.</title>
        <authorList>
            <person name="Daly N.L."/>
            <person name="Ekberg J.A."/>
            <person name="Thomas L."/>
            <person name="Adams D.J."/>
            <person name="Lewis R.J."/>
            <person name="Craik D.J."/>
        </authorList>
    </citation>
    <scope>STRUCTURE BY NMR OF 52-82</scope>
    <scope>DISULFIDE BONDS</scope>
</reference>
<reference key="4">
    <citation type="journal article" date="2006" name="Biochemistry">
        <title>Synthetic muO-conotoxin MrVIB blocks TTX-resistant sodium channel NaV1.8 and has a long-lasting analgesic activity.</title>
        <authorList>
            <person name="Bulaj G."/>
            <person name="Zhang M.M."/>
            <person name="Green B.R."/>
            <person name="Fiedler B."/>
            <person name="Layer R.T."/>
            <person name="Wei S."/>
            <person name="Nielsen J.S."/>
            <person name="Low S.J."/>
            <person name="Klein B.D."/>
            <person name="Wagstaff J.D."/>
            <person name="Chicoine L."/>
            <person name="Harty T.P."/>
            <person name="Terlau H."/>
            <person name="Yoshikami D."/>
            <person name="Olivera B.M."/>
        </authorList>
    </citation>
    <scope>SYNTHESIS OF 52-82</scope>
    <scope>FUNCTION</scope>
</reference>
<reference key="5">
    <citation type="journal article" date="2006" name="FEBS Lett.">
        <title>The muO-conotoxin MrVIA inhibits voltage-gated sodium channels by associating with domain-3.</title>
        <authorList>
            <person name="Zorn S."/>
            <person name="Leipold E."/>
            <person name="Hansel A."/>
            <person name="Bulaj G."/>
            <person name="Olivera B.M."/>
            <person name="Terlau H."/>
            <person name="Heinemann S.H."/>
        </authorList>
    </citation>
    <scope>SYNTHESIS OF 52-82</scope>
    <scope>FUNCTION</scope>
</reference>
<comment type="function">
    <text evidence="3 4">MuO-conotoxins are gating-modifier toxins that inhibit sodium current by trapping the domain II voltage sensor in the closed position to prevent opening of the sodium channel. This toxin has a preference for Nav1.4/SCN4A over Nav1.2/SCN2A sodium channels. It blocks Nav channels by interacting mainly with the C-terminal part of the pore loop of domain-3. It also blocks fast-inactivating calcium current. Blocks Nav1.8/SCN10A sodium channels and has potent and long-lasting local anesthetic effects. It can also block propagation of action potentials in A- and C-fibers in sciatic nerve as well as skeletal muscle in isolated preparations.</text>
</comment>
<comment type="subcellular location">
    <subcellularLocation>
        <location evidence="5 6">Secreted</location>
    </subcellularLocation>
</comment>
<comment type="tissue specificity">
    <text evidence="10 11">Expressed by the venom duct.</text>
</comment>
<comment type="domain">
    <text evidence="2">The presence of a 'disulfide through disulfide knot' structurally defines this protein as a knottin.</text>
</comment>
<comment type="domain">
    <text>The cysteine framework is VI/VII (C-C-CC-C-C).</text>
</comment>
<comment type="mass spectrometry" mass="3404.8" method="LSI" evidence="5"/>
<comment type="mass spectrometry" mass="3404.9" method="Electrospray" evidence="6"/>
<comment type="miscellaneous">
    <text>This peptide was under preclinical trial by Cognetix Inc under the name CGX-1002 as a local anesthetic agent.</text>
</comment>
<comment type="similarity">
    <text evidence="9">Belongs to the conotoxin O1 superfamily.</text>
</comment>
<dbReference type="EMBL" id="S78990">
    <property type="protein sequence ID" value="AAB34916.1"/>
    <property type="molecule type" value="mRNA"/>
</dbReference>
<dbReference type="PIR" id="B58586">
    <property type="entry name" value="B58586"/>
</dbReference>
<dbReference type="PDB" id="1RMK">
    <property type="method" value="NMR"/>
    <property type="chains" value="A=52-82"/>
</dbReference>
<dbReference type="PDBsum" id="1RMK"/>
<dbReference type="SMR" id="Q26443"/>
<dbReference type="ConoServer" id="597">
    <property type="toxin name" value="MrVIB precursor"/>
</dbReference>
<dbReference type="GO" id="GO:0005576">
    <property type="term" value="C:extracellular region"/>
    <property type="evidence" value="ECO:0007669"/>
    <property type="project" value="UniProtKB-SubCell"/>
</dbReference>
<dbReference type="GO" id="GO:0008200">
    <property type="term" value="F:ion channel inhibitor activity"/>
    <property type="evidence" value="ECO:0007669"/>
    <property type="project" value="InterPro"/>
</dbReference>
<dbReference type="GO" id="GO:0017080">
    <property type="term" value="F:sodium channel regulator activity"/>
    <property type="evidence" value="ECO:0007669"/>
    <property type="project" value="UniProtKB-KW"/>
</dbReference>
<dbReference type="GO" id="GO:0090729">
    <property type="term" value="F:toxin activity"/>
    <property type="evidence" value="ECO:0007669"/>
    <property type="project" value="UniProtKB-KW"/>
</dbReference>
<dbReference type="InterPro" id="IPR004214">
    <property type="entry name" value="Conotoxin"/>
</dbReference>
<dbReference type="Pfam" id="PF02950">
    <property type="entry name" value="Conotoxin"/>
    <property type="match status" value="1"/>
</dbReference>
<dbReference type="SUPFAM" id="SSF57059">
    <property type="entry name" value="omega toxin-like"/>
    <property type="match status" value="1"/>
</dbReference>
<sequence length="82" mass="9210">MKLTCMMIVAVLFLTAWTLVMADDSNNGLANHFLKSRDEMEDPEASKLEKRACSKKWEYCIVPILGFVYCCPGLICGPFVCV</sequence>
<feature type="signal peptide" evidence="1">
    <location>
        <begin position="1"/>
        <end position="22"/>
    </location>
</feature>
<feature type="propeptide" id="PRO_0000034902" evidence="5 6">
    <location>
        <begin position="23"/>
        <end position="49"/>
    </location>
</feature>
<feature type="peptide" id="PRO_0000034903" description="Mu-conotoxin MrVIB" evidence="5 6">
    <location>
        <begin position="52"/>
        <end position="82"/>
    </location>
</feature>
<feature type="disulfide bond" evidence="2 12">
    <location>
        <begin position="53"/>
        <end position="71"/>
    </location>
</feature>
<feature type="disulfide bond" evidence="2 12">
    <location>
        <begin position="60"/>
        <end position="76"/>
    </location>
</feature>
<feature type="disulfide bond" evidence="2 12">
    <location>
        <begin position="70"/>
        <end position="81"/>
    </location>
</feature>
<feature type="strand" evidence="13">
    <location>
        <begin position="69"/>
        <end position="71"/>
    </location>
</feature>
<feature type="strand" evidence="13">
    <location>
        <begin position="78"/>
        <end position="82"/>
    </location>
</feature>
<accession>Q26443</accession>
<protein>
    <recommendedName>
        <fullName evidence="7 8">Mu-conotoxin MrVIB</fullName>
    </recommendedName>
    <alternativeName>
        <fullName>CGX-1002</fullName>
    </alternativeName>
</protein>
<evidence type="ECO:0000255" key="1"/>
<evidence type="ECO:0000269" key="2">
    <source>
    </source>
</evidence>
<evidence type="ECO:0000269" key="3">
    <source>
    </source>
</evidence>
<evidence type="ECO:0000269" key="4">
    <source>
    </source>
</evidence>
<evidence type="ECO:0000269" key="5">
    <source>
    </source>
</evidence>
<evidence type="ECO:0000269" key="6">
    <source>
    </source>
</evidence>
<evidence type="ECO:0000303" key="7">
    <source>
    </source>
</evidence>
<evidence type="ECO:0000303" key="8">
    <source>
    </source>
</evidence>
<evidence type="ECO:0000305" key="9"/>
<evidence type="ECO:0000305" key="10">
    <source>
    </source>
</evidence>
<evidence type="ECO:0000305" key="11">
    <source>
    </source>
</evidence>
<evidence type="ECO:0000312" key="12">
    <source>
        <dbReference type="PDB" id="1RMK"/>
    </source>
</evidence>
<evidence type="ECO:0007829" key="13">
    <source>
        <dbReference type="PDB" id="1RMK"/>
    </source>
</evidence>
<keyword id="KW-0002">3D-structure</keyword>
<keyword id="KW-0165">Cleavage on pair of basic residues</keyword>
<keyword id="KW-0903">Direct protein sequencing</keyword>
<keyword id="KW-1015">Disulfide bond</keyword>
<keyword id="KW-0872">Ion channel impairing toxin</keyword>
<keyword id="KW-0960">Knottin</keyword>
<keyword id="KW-0528">Neurotoxin</keyword>
<keyword id="KW-0964">Secreted</keyword>
<keyword id="KW-0732">Signal</keyword>
<keyword id="KW-0800">Toxin</keyword>
<keyword id="KW-0738">Voltage-gated sodium channel impairing toxin</keyword>
<name>O16B_CONMR</name>
<proteinExistence type="evidence at protein level"/>
<organism>
    <name type="scientific">Conus marmoreus</name>
    <name type="common">Marble cone</name>
    <dbReference type="NCBI Taxonomy" id="42752"/>
    <lineage>
        <taxon>Eukaryota</taxon>
        <taxon>Metazoa</taxon>
        <taxon>Spiralia</taxon>
        <taxon>Lophotrochozoa</taxon>
        <taxon>Mollusca</taxon>
        <taxon>Gastropoda</taxon>
        <taxon>Caenogastropoda</taxon>
        <taxon>Neogastropoda</taxon>
        <taxon>Conoidea</taxon>
        <taxon>Conidae</taxon>
        <taxon>Conus</taxon>
    </lineage>
</organism>